<protein>
    <recommendedName>
        <fullName evidence="1">Arginine--tRNA ligase</fullName>
        <ecNumber evidence="1">6.1.1.19</ecNumber>
    </recommendedName>
    <alternativeName>
        <fullName evidence="1">Arginyl-tRNA synthetase</fullName>
        <shortName evidence="1">ArgRS</shortName>
    </alternativeName>
</protein>
<gene>
    <name evidence="1" type="primary">argS</name>
    <name type="ordered locus">CMS1474</name>
</gene>
<sequence length="554" mass="60487">MTTPDLTGALFEIVARTAGRRPGGDAIALSPDMVVLERPRNRDHGDWATNIAMRIAKPLGESPRTIAADIAKALGELPQVAKVDVAGPGFINITLEAAAAGALAHTIVESGPAYGRGHSLEGIRINLEFVSANPTGPIHLGGVRWAAVGDSLARILQAEGADVTREYYFNDHGSQIDRFARSLLASHLGEETPEDGYGGAYIGEIAERVVEGYEGDIDALTREAQQEVFRKSGTELMFGEIKQKLHDFGVDFDVFFHEDSLHESGAVDRAIARLTELGHVFEEDGAIWLRTTTFGDDRDRVVIRSTGEPAYISGDLGYYLDKRERGFEQNIIMLGADHHGYVGRMMAMVEAFGDTPGVNLQILIGQMVNLLRDGEPVRMSKRAGTIVTLDDLVDAVGVDAGRYALVRSSADQNLDIDLAVLGKRTNDNPVFYVQYAHARTCAVDRNAAASGVDRSAFAPELLTHPTESALLGLLQEFPRIVAQAAELREPHRVARYVEELAGSYHRWYDSCRVVPRGDEEVTDLHRTRLWLNDAVRQVVANGLNLVGVSAPERM</sequence>
<name>SYR_CLASE</name>
<organism>
    <name type="scientific">Clavibacter sepedonicus</name>
    <name type="common">Clavibacter michiganensis subsp. sepedonicus</name>
    <dbReference type="NCBI Taxonomy" id="31964"/>
    <lineage>
        <taxon>Bacteria</taxon>
        <taxon>Bacillati</taxon>
        <taxon>Actinomycetota</taxon>
        <taxon>Actinomycetes</taxon>
        <taxon>Micrococcales</taxon>
        <taxon>Microbacteriaceae</taxon>
        <taxon>Clavibacter</taxon>
    </lineage>
</organism>
<accession>B0RAP7</accession>
<evidence type="ECO:0000255" key="1">
    <source>
        <dbReference type="HAMAP-Rule" id="MF_00123"/>
    </source>
</evidence>
<dbReference type="EC" id="6.1.1.19" evidence="1"/>
<dbReference type="EMBL" id="AM849034">
    <property type="protein sequence ID" value="CAQ01585.1"/>
    <property type="molecule type" value="Genomic_DNA"/>
</dbReference>
<dbReference type="RefSeq" id="WP_012298852.1">
    <property type="nucleotide sequence ID" value="NZ_MZMN01000003.1"/>
</dbReference>
<dbReference type="SMR" id="B0RAP7"/>
<dbReference type="STRING" id="31964.CMS1474"/>
<dbReference type="KEGG" id="cms:CMS1474"/>
<dbReference type="eggNOG" id="COG0018">
    <property type="taxonomic scope" value="Bacteria"/>
</dbReference>
<dbReference type="HOGENOM" id="CLU_006406_0_1_11"/>
<dbReference type="OrthoDB" id="9803211at2"/>
<dbReference type="Proteomes" id="UP000001318">
    <property type="component" value="Chromosome"/>
</dbReference>
<dbReference type="GO" id="GO:0005737">
    <property type="term" value="C:cytoplasm"/>
    <property type="evidence" value="ECO:0007669"/>
    <property type="project" value="UniProtKB-SubCell"/>
</dbReference>
<dbReference type="GO" id="GO:0004814">
    <property type="term" value="F:arginine-tRNA ligase activity"/>
    <property type="evidence" value="ECO:0007669"/>
    <property type="project" value="UniProtKB-UniRule"/>
</dbReference>
<dbReference type="GO" id="GO:0005524">
    <property type="term" value="F:ATP binding"/>
    <property type="evidence" value="ECO:0007669"/>
    <property type="project" value="UniProtKB-UniRule"/>
</dbReference>
<dbReference type="GO" id="GO:0006420">
    <property type="term" value="P:arginyl-tRNA aminoacylation"/>
    <property type="evidence" value="ECO:0007669"/>
    <property type="project" value="UniProtKB-UniRule"/>
</dbReference>
<dbReference type="CDD" id="cd00671">
    <property type="entry name" value="ArgRS_core"/>
    <property type="match status" value="1"/>
</dbReference>
<dbReference type="FunFam" id="1.10.730.10:FF:000008">
    <property type="entry name" value="Arginine--tRNA ligase"/>
    <property type="match status" value="1"/>
</dbReference>
<dbReference type="FunFam" id="3.40.50.620:FF:000062">
    <property type="entry name" value="Arginine--tRNA ligase"/>
    <property type="match status" value="1"/>
</dbReference>
<dbReference type="Gene3D" id="3.30.1360.70">
    <property type="entry name" value="Arginyl tRNA synthetase N-terminal domain"/>
    <property type="match status" value="1"/>
</dbReference>
<dbReference type="Gene3D" id="3.40.50.620">
    <property type="entry name" value="HUPs"/>
    <property type="match status" value="1"/>
</dbReference>
<dbReference type="Gene3D" id="1.10.730.10">
    <property type="entry name" value="Isoleucyl-tRNA Synthetase, Domain 1"/>
    <property type="match status" value="1"/>
</dbReference>
<dbReference type="HAMAP" id="MF_00123">
    <property type="entry name" value="Arg_tRNA_synth"/>
    <property type="match status" value="1"/>
</dbReference>
<dbReference type="InterPro" id="IPR001412">
    <property type="entry name" value="aa-tRNA-synth_I_CS"/>
</dbReference>
<dbReference type="InterPro" id="IPR001278">
    <property type="entry name" value="Arg-tRNA-ligase"/>
</dbReference>
<dbReference type="InterPro" id="IPR005148">
    <property type="entry name" value="Arg-tRNA-synth_N"/>
</dbReference>
<dbReference type="InterPro" id="IPR036695">
    <property type="entry name" value="Arg-tRNA-synth_N_sf"/>
</dbReference>
<dbReference type="InterPro" id="IPR035684">
    <property type="entry name" value="ArgRS_core"/>
</dbReference>
<dbReference type="InterPro" id="IPR008909">
    <property type="entry name" value="DALR_anticod-bd"/>
</dbReference>
<dbReference type="InterPro" id="IPR014729">
    <property type="entry name" value="Rossmann-like_a/b/a_fold"/>
</dbReference>
<dbReference type="InterPro" id="IPR009080">
    <property type="entry name" value="tRNAsynth_Ia_anticodon-bd"/>
</dbReference>
<dbReference type="NCBIfam" id="TIGR00456">
    <property type="entry name" value="argS"/>
    <property type="match status" value="1"/>
</dbReference>
<dbReference type="PANTHER" id="PTHR11956:SF5">
    <property type="entry name" value="ARGININE--TRNA LIGASE, CYTOPLASMIC"/>
    <property type="match status" value="1"/>
</dbReference>
<dbReference type="PANTHER" id="PTHR11956">
    <property type="entry name" value="ARGINYL-TRNA SYNTHETASE"/>
    <property type="match status" value="1"/>
</dbReference>
<dbReference type="Pfam" id="PF03485">
    <property type="entry name" value="Arg_tRNA_synt_N"/>
    <property type="match status" value="1"/>
</dbReference>
<dbReference type="Pfam" id="PF05746">
    <property type="entry name" value="DALR_1"/>
    <property type="match status" value="1"/>
</dbReference>
<dbReference type="Pfam" id="PF00750">
    <property type="entry name" value="tRNA-synt_1d"/>
    <property type="match status" value="1"/>
</dbReference>
<dbReference type="PRINTS" id="PR01038">
    <property type="entry name" value="TRNASYNTHARG"/>
</dbReference>
<dbReference type="SMART" id="SM01016">
    <property type="entry name" value="Arg_tRNA_synt_N"/>
    <property type="match status" value="1"/>
</dbReference>
<dbReference type="SMART" id="SM00836">
    <property type="entry name" value="DALR_1"/>
    <property type="match status" value="1"/>
</dbReference>
<dbReference type="SUPFAM" id="SSF47323">
    <property type="entry name" value="Anticodon-binding domain of a subclass of class I aminoacyl-tRNA synthetases"/>
    <property type="match status" value="1"/>
</dbReference>
<dbReference type="SUPFAM" id="SSF55190">
    <property type="entry name" value="Arginyl-tRNA synthetase (ArgRS), N-terminal 'additional' domain"/>
    <property type="match status" value="1"/>
</dbReference>
<dbReference type="SUPFAM" id="SSF52374">
    <property type="entry name" value="Nucleotidylyl transferase"/>
    <property type="match status" value="1"/>
</dbReference>
<dbReference type="PROSITE" id="PS00178">
    <property type="entry name" value="AA_TRNA_LIGASE_I"/>
    <property type="match status" value="1"/>
</dbReference>
<comment type="catalytic activity">
    <reaction evidence="1">
        <text>tRNA(Arg) + L-arginine + ATP = L-arginyl-tRNA(Arg) + AMP + diphosphate</text>
        <dbReference type="Rhea" id="RHEA:20301"/>
        <dbReference type="Rhea" id="RHEA-COMP:9658"/>
        <dbReference type="Rhea" id="RHEA-COMP:9673"/>
        <dbReference type="ChEBI" id="CHEBI:30616"/>
        <dbReference type="ChEBI" id="CHEBI:32682"/>
        <dbReference type="ChEBI" id="CHEBI:33019"/>
        <dbReference type="ChEBI" id="CHEBI:78442"/>
        <dbReference type="ChEBI" id="CHEBI:78513"/>
        <dbReference type="ChEBI" id="CHEBI:456215"/>
        <dbReference type="EC" id="6.1.1.19"/>
    </reaction>
</comment>
<comment type="subunit">
    <text evidence="1">Monomer.</text>
</comment>
<comment type="subcellular location">
    <subcellularLocation>
        <location evidence="1">Cytoplasm</location>
    </subcellularLocation>
</comment>
<comment type="similarity">
    <text evidence="1">Belongs to the class-I aminoacyl-tRNA synthetase family.</text>
</comment>
<proteinExistence type="inferred from homology"/>
<keyword id="KW-0030">Aminoacyl-tRNA synthetase</keyword>
<keyword id="KW-0067">ATP-binding</keyword>
<keyword id="KW-0963">Cytoplasm</keyword>
<keyword id="KW-0436">Ligase</keyword>
<keyword id="KW-0547">Nucleotide-binding</keyword>
<keyword id="KW-0648">Protein biosynthesis</keyword>
<feature type="chain" id="PRO_1000076208" description="Arginine--tRNA ligase">
    <location>
        <begin position="1"/>
        <end position="554"/>
    </location>
</feature>
<feature type="short sequence motif" description="'HIGH' region">
    <location>
        <begin position="132"/>
        <end position="142"/>
    </location>
</feature>
<reference key="1">
    <citation type="journal article" date="2008" name="J. Bacteriol.">
        <title>Genome of the actinomycete plant pathogen Clavibacter michiganensis subsp. sepedonicus suggests recent niche adaptation.</title>
        <authorList>
            <person name="Bentley S.D."/>
            <person name="Corton C."/>
            <person name="Brown S.E."/>
            <person name="Barron A."/>
            <person name="Clark L."/>
            <person name="Doggett J."/>
            <person name="Harris B."/>
            <person name="Ormond D."/>
            <person name="Quail M.A."/>
            <person name="May G."/>
            <person name="Francis D."/>
            <person name="Knudson D."/>
            <person name="Parkhill J."/>
            <person name="Ishimaru C.A."/>
        </authorList>
    </citation>
    <scope>NUCLEOTIDE SEQUENCE [LARGE SCALE GENOMIC DNA]</scope>
    <source>
        <strain>ATCC 33113 / DSM 20744 / JCM 9667 / LMG 2889 / ICMP 2535 / C-1</strain>
    </source>
</reference>